<dbReference type="EMBL" id="L09649">
    <property type="protein sequence ID" value="AAA71930.1"/>
    <property type="molecule type" value="Genomic_DNA"/>
</dbReference>
<dbReference type="EMBL" id="AE008692">
    <property type="protein sequence ID" value="AAV89867.2"/>
    <property type="status" value="ALT_INIT"/>
    <property type="molecule type" value="Genomic_DNA"/>
</dbReference>
<dbReference type="PIR" id="A40649">
    <property type="entry name" value="A40649"/>
</dbReference>
<dbReference type="RefSeq" id="WP_017466517.1">
    <property type="nucleotide sequence ID" value="NZ_CP035711.1"/>
</dbReference>
<dbReference type="STRING" id="264203.ZMO1243"/>
<dbReference type="KEGG" id="zmo:ZMO1243"/>
<dbReference type="eggNOG" id="ENOG5034305">
    <property type="taxonomic scope" value="Bacteria"/>
</dbReference>
<dbReference type="HOGENOM" id="CLU_093190_0_0_5"/>
<dbReference type="Proteomes" id="UP000001173">
    <property type="component" value="Chromosome"/>
</dbReference>
<dbReference type="InterPro" id="IPR025411">
    <property type="entry name" value="DUF4136"/>
</dbReference>
<dbReference type="Pfam" id="PF13590">
    <property type="entry name" value="DUF4136"/>
    <property type="match status" value="1"/>
</dbReference>
<name>Y1243_ZYMMO</name>
<sequence>MRHLITISQPAIPQDVTNKDGHKAKKQLRCKGIYPFLWMFFFAAALPLQATQPIEVTRFHKSDMATTGIVNIMPHDPTLRNTLEYQRYTASIARNLTRIGFQVTDNPQQAEYTMMYDVMRGTHYRDNGQTPPRDTRPHGGISLGGGYGGGGGFGGGGVGWGGGGSGISIGGGGGGGRGFGGGGGGISAGISVPVGNGYHTSNKVETILTAQLSRRDTHQAIWEGRARTEAKSNKAESTPDIAVDRLATAMFGQFPGESGETEKVK</sequence>
<comment type="sequence caution" evidence="2">
    <conflict type="erroneous initiation">
        <sequence resource="EMBL-CDS" id="AAV89867"/>
    </conflict>
</comment>
<proteinExistence type="predicted"/>
<reference key="1">
    <citation type="journal article" date="1993" name="J. Bacteriol.">
        <title>Cloning, sequencing, and expression of the Zymomonas mobilis phosphoglycerate mutase gene (pgm) in Escherichia coli.</title>
        <authorList>
            <person name="Yomano L.P."/>
            <person name="Scopes R.K."/>
            <person name="Ingram L.O."/>
        </authorList>
    </citation>
    <scope>NUCLEOTIDE SEQUENCE [GENOMIC DNA]</scope>
    <source>
        <strain>ATCC 31821 / ZM4 / CP4</strain>
    </source>
</reference>
<reference key="2">
    <citation type="journal article" date="2005" name="Nat. Biotechnol.">
        <title>The genome sequence of the ethanologenic bacterium Zymomonas mobilis ZM4.</title>
        <authorList>
            <person name="Seo J.-S."/>
            <person name="Chong H."/>
            <person name="Park H.S."/>
            <person name="Yoon K.-O."/>
            <person name="Jung C."/>
            <person name="Kim J.J."/>
            <person name="Hong J.H."/>
            <person name="Kim H."/>
            <person name="Kim J.-H."/>
            <person name="Kil J.-I."/>
            <person name="Park C.J."/>
            <person name="Oh H.-M."/>
            <person name="Lee J.-S."/>
            <person name="Jin S.-J."/>
            <person name="Um H.-W."/>
            <person name="Lee H.-J."/>
            <person name="Oh S.-J."/>
            <person name="Kim J.Y."/>
            <person name="Kang H.L."/>
            <person name="Lee S.Y."/>
            <person name="Lee K.J."/>
            <person name="Kang H.S."/>
        </authorList>
    </citation>
    <scope>NUCLEOTIDE SEQUENCE [LARGE SCALE GENOMIC DNA]</scope>
    <source>
        <strain>ATCC 31821 / ZM4 / CP4</strain>
    </source>
</reference>
<keyword id="KW-1185">Reference proteome</keyword>
<organism>
    <name type="scientific">Zymomonas mobilis subsp. mobilis (strain ATCC 31821 / ZM4 / CP4)</name>
    <dbReference type="NCBI Taxonomy" id="264203"/>
    <lineage>
        <taxon>Bacteria</taxon>
        <taxon>Pseudomonadati</taxon>
        <taxon>Pseudomonadota</taxon>
        <taxon>Alphaproteobacteria</taxon>
        <taxon>Sphingomonadales</taxon>
        <taxon>Zymomonadaceae</taxon>
        <taxon>Zymomonas</taxon>
    </lineage>
</organism>
<accession>P30794</accession>
<accession>Q5NN43</accession>
<protein>
    <recommendedName>
        <fullName>Uncharacterized protein ZMO1243</fullName>
    </recommendedName>
</protein>
<evidence type="ECO:0000256" key="1">
    <source>
        <dbReference type="SAM" id="MobiDB-lite"/>
    </source>
</evidence>
<evidence type="ECO:0000305" key="2"/>
<feature type="chain" id="PRO_0000066065" description="Uncharacterized protein ZMO1243">
    <location>
        <begin position="1"/>
        <end position="265"/>
    </location>
</feature>
<feature type="region of interest" description="Disordered" evidence="1">
    <location>
        <begin position="122"/>
        <end position="145"/>
    </location>
</feature>
<feature type="sequence conflict" description="In Ref. 1; AAA71930." evidence="2" ref="1">
    <original>A</original>
    <variation>P</variation>
    <location>
        <position position="11"/>
    </location>
</feature>
<feature type="sequence conflict" description="In Ref. 1; AAA71930." evidence="2" ref="1">
    <original>H</original>
    <variation>R</variation>
    <location>
        <position position="22"/>
    </location>
</feature>
<feature type="sequence conflict" description="In Ref. 1; AAA71930." evidence="2" ref="1">
    <original>W</original>
    <variation>G</variation>
    <location>
        <position position="38"/>
    </location>
</feature>
<feature type="sequence conflict" description="In Ref. 1; AAA71930." evidence="2" ref="1">
    <original>T</original>
    <variation>M</variation>
    <location>
        <position position="130"/>
    </location>
</feature>
<gene>
    <name type="ordered locus">ZMO1243</name>
    <name type="ORF">zm1</name>
</gene>